<organism>
    <name type="scientific">Hadronyche versuta</name>
    <name type="common">Blue mountains funnel-web spider</name>
    <name type="synonym">Atrax versutus</name>
    <dbReference type="NCBI Taxonomy" id="6904"/>
    <lineage>
        <taxon>Eukaryota</taxon>
        <taxon>Metazoa</taxon>
        <taxon>Ecdysozoa</taxon>
        <taxon>Arthropoda</taxon>
        <taxon>Chelicerata</taxon>
        <taxon>Arachnida</taxon>
        <taxon>Araneae</taxon>
        <taxon>Mygalomorphae</taxon>
        <taxon>Hexathelidae</taxon>
        <taxon>Hadronyche</taxon>
    </lineage>
</organism>
<proteinExistence type="evidence at protein level"/>
<reference key="1">
    <citation type="journal article" date="1988" name="Biochem. J.">
        <title>Amino acid sequence of versutoxin, a lethal neurotoxin from the venom of the funnel-web spider Atrax versutus.</title>
        <authorList>
            <person name="Brown M.R."/>
            <person name="Sheumack D.D."/>
            <person name="Tyler M.I."/>
            <person name="Howden M.E.H."/>
        </authorList>
    </citation>
    <scope>PROTEIN SEQUENCE</scope>
    <scope>SUBCELLULAR LOCATION</scope>
    <source>
        <tissue>Venom</tissue>
    </source>
</reference>
<reference key="2">
    <citation type="journal article" date="1993" name="Brain Res.">
        <title>Australian funnel-web spider toxin, versutoxin, enhances spontaneous synaptic activity in single brain neurons in vitro.</title>
        <authorList>
            <person name="Chieng B."/>
            <person name="Howden M.E.H."/>
            <person name="Christie M.J."/>
        </authorList>
    </citation>
    <scope>FUNCTION</scope>
</reference>
<reference key="3">
    <citation type="journal article" date="1994" name="Pflugers Arch.">
        <title>Modification of sodium channel gating and kinetics by versutoxin from the Australian funnel-web spider Hadronyche versuta.</title>
        <authorList>
            <person name="Nicholson G.M."/>
            <person name="Willow M."/>
            <person name="Howden M.E."/>
            <person name="Narahashi T."/>
        </authorList>
    </citation>
    <scope>FUNCTION</scope>
</reference>
<reference key="4">
    <citation type="journal article" date="1996" name="Toxicon">
        <title>Selective alteration of sodium channel gating by Australian funnel-web spider toxins.</title>
        <authorList>
            <person name="Nicholson G.M."/>
            <person name="Little M.J."/>
            <person name="Tyler M.I."/>
            <person name="Narahashi T."/>
        </authorList>
    </citation>
    <scope>FUNCTION</scope>
</reference>
<reference key="5">
    <citation type="journal article" date="1998" name="FEBS Lett.">
        <title>Delta-atracotoxins from Australian funnel-web spiders compete with scorpion alpha-toxin binding on both rat brain and insect sodium channels.</title>
        <authorList>
            <person name="Little M.J."/>
            <person name="Wilson H."/>
            <person name="Zappia C."/>
            <person name="Cestele S."/>
            <person name="Tyler M.I."/>
            <person name="Martin-Eauclaire M.-F."/>
            <person name="Gordon D."/>
            <person name="Nicholson G.M."/>
        </authorList>
    </citation>
    <scope>FUNCTION</scope>
    <scope>TOXIC DOSE</scope>
</reference>
<reference key="6">
    <citation type="journal article" date="2001" name="J. Exp. Biol.">
        <title>Electrophysiological analysis of the neurotoxic action of a funnel-web spider toxin, delta-atracotoxin-HV1a, on insect voltage-gated Na+ channels.</title>
        <authorList>
            <person name="Grolleau F."/>
            <person name="Stankiewicz M."/>
            <person name="Birinyi-Strachan L."/>
            <person name="Wang X.H."/>
            <person name="Nicholson G.M."/>
            <person name="Pelhate M."/>
            <person name="Lapied B."/>
        </authorList>
    </citation>
    <scope>FUNCTION</scope>
</reference>
<reference key="7">
    <citation type="journal article" date="2002" name="Eur. J. Biochem.">
        <title>Variations in receptor site-3 on rat brain and insect sodium channels highlighted by binding of a funnel-web spider delta-atracotoxin.</title>
        <authorList>
            <person name="Gilles N."/>
            <person name="Harrison G."/>
            <person name="Karbat I."/>
            <person name="Gurevitz M."/>
            <person name="Nicholson G.M."/>
            <person name="Gordon D."/>
        </authorList>
    </citation>
    <scope>FUNCTION</scope>
</reference>
<reference key="8">
    <citation type="journal article" date="2008" name="PLoS Biol.">
        <title>Phase coupling of a circadian neuropeptide with rest/activity rhythms detected using a membrane-tethered spider toxin.</title>
        <authorList>
            <person name="Wu Y."/>
            <person name="Cao G."/>
            <person name="Pavlicek B."/>
            <person name="Luo X."/>
            <person name="Nitabach M.N."/>
        </authorList>
    </citation>
    <scope>FUNCTION</scope>
</reference>
<reference key="9">
    <citation type="journal article" date="1997" name="Structure">
        <title>The structure of versutoxin (delta-atracotoxin-Hv1) provides insights into the binding of site 3 neurotoxins to the voltage-gated sodium channel.</title>
        <authorList>
            <person name="Fletcher J.I."/>
            <person name="Chapman B.E."/>
            <person name="Mackay J.P."/>
            <person name="Howden M.E.H."/>
            <person name="King G.F."/>
        </authorList>
    </citation>
    <scope>STRUCTURE BY NMR OF 1-42</scope>
    <scope>MASS SPECTROMETRY</scope>
    <source>
        <tissue>Venom</tissue>
    </source>
</reference>
<comment type="function">
    <text evidence="1 2 3 5 6 7 9">Inhibits tetrodotoxin-sensitive voltage-gated sodium channels (Nav) by binding to site 3. Slows the inactivation, and causes a prolongation of action potential duration resulting in repetitive firing in autonomic and motor nerve fibers. Does not depolarize the resting potential. Does not affect tetrodotoxin-resistant sodium channels. This lethal neurotoxin is active on both insect and mammalian voltage-gated sodium channels. Pan-neuronal expression in Drosophila is lethal but flies engineered to express the toxin only in pacemaker neurons have profound defects in circadian rhythm but a normal lifespan.</text>
</comment>
<comment type="subcellular location">
    <subcellularLocation>
        <location evidence="4">Secreted</location>
    </subcellularLocation>
</comment>
<comment type="tissue specificity">
    <text evidence="20">Expressed by the venom gland.</text>
</comment>
<comment type="domain">
    <text evidence="8">The presence of a 'disulfide through disulfide knot' structurally defines this protein as a knottin.</text>
</comment>
<comment type="mass spectrometry" mass="4847.2" method="Electrospray" evidence="8"/>
<comment type="toxic dose">
    <text evidence="9">LD(50) is 0.06 ug/kg by intracerebroventricular injection into mice.</text>
</comment>
<comment type="toxic dose">
    <text evidence="9">LD(50) is 0.2 mg/kg by subcutaneous injection into mice.</text>
</comment>
<comment type="toxic dose">
    <text evidence="9">LD(50) is 770 pmol/g when injected into crickets.</text>
</comment>
<comment type="toxic dose">
    <text evidence="9">PD(50) is 200 +-36 pmol/g when injected into crickets.</text>
</comment>
<comment type="toxic dose">
    <text evidence="9">PD(50) is 54 +- 14 pmol/g when injected into blowfly larvae.</text>
</comment>
<comment type="miscellaneous">
    <text>Is the sole lethal toxin in male and female A.versutus venom.</text>
</comment>
<comment type="similarity">
    <text evidence="19">Belongs to the neurotoxin 06 (delta-actx) family.</text>
</comment>
<name>D1A_HADVE</name>
<feature type="chain" id="PRO_0000087654" description="Delta-hexatoxin-Hv1a" evidence="4">
    <location>
        <begin position="1"/>
        <end position="42"/>
    </location>
</feature>
<feature type="disulfide bond" evidence="8 21">
    <location>
        <begin position="1"/>
        <end position="15"/>
    </location>
</feature>
<feature type="disulfide bond" evidence="8 21">
    <location>
        <begin position="8"/>
        <end position="20"/>
    </location>
</feature>
<feature type="disulfide bond" evidence="8 21">
    <location>
        <begin position="14"/>
        <end position="31"/>
    </location>
</feature>
<feature type="disulfide bond" evidence="8 21">
    <location>
        <begin position="16"/>
        <end position="42"/>
    </location>
</feature>
<feature type="strand" evidence="22">
    <location>
        <begin position="18"/>
        <end position="21"/>
    </location>
</feature>
<feature type="strand" evidence="22">
    <location>
        <begin position="30"/>
        <end position="33"/>
    </location>
</feature>
<feature type="helix" evidence="22">
    <location>
        <begin position="35"/>
        <end position="40"/>
    </location>
</feature>
<accession>P13494</accession>
<evidence type="ECO:0000269" key="1">
    <source>
    </source>
</evidence>
<evidence type="ECO:0000269" key="2">
    <source>
    </source>
</evidence>
<evidence type="ECO:0000269" key="3">
    <source>
    </source>
</evidence>
<evidence type="ECO:0000269" key="4">
    <source>
    </source>
</evidence>
<evidence type="ECO:0000269" key="5">
    <source>
    </source>
</evidence>
<evidence type="ECO:0000269" key="6">
    <source>
    </source>
</evidence>
<evidence type="ECO:0000269" key="7">
    <source>
    </source>
</evidence>
<evidence type="ECO:0000269" key="8">
    <source>
    </source>
</evidence>
<evidence type="ECO:0000269" key="9">
    <source>
    </source>
</evidence>
<evidence type="ECO:0000303" key="10">
    <source>
    </source>
</evidence>
<evidence type="ECO:0000303" key="11">
    <source>
    </source>
</evidence>
<evidence type="ECO:0000303" key="12">
    <source>
    </source>
</evidence>
<evidence type="ECO:0000303" key="13">
    <source>
    </source>
</evidence>
<evidence type="ECO:0000303" key="14">
    <source>
    </source>
</evidence>
<evidence type="ECO:0000303" key="15">
    <source>
    </source>
</evidence>
<evidence type="ECO:0000303" key="16">
    <source>
    </source>
</evidence>
<evidence type="ECO:0000303" key="17">
    <source>
    </source>
</evidence>
<evidence type="ECO:0000303" key="18">
    <source>
    </source>
</evidence>
<evidence type="ECO:0000305" key="19"/>
<evidence type="ECO:0000305" key="20">
    <source>
    </source>
</evidence>
<evidence type="ECO:0000312" key="21">
    <source>
        <dbReference type="PDB" id="1VTX"/>
    </source>
</evidence>
<evidence type="ECO:0007829" key="22">
    <source>
        <dbReference type="PDB" id="1VTX"/>
    </source>
</evidence>
<dbReference type="PIR" id="S00343">
    <property type="entry name" value="NTIIV"/>
</dbReference>
<dbReference type="PDB" id="1VTX">
    <property type="method" value="NMR"/>
    <property type="chains" value="A=1-42"/>
</dbReference>
<dbReference type="PDBsum" id="1VTX"/>
<dbReference type="BMRB" id="P13494"/>
<dbReference type="SMR" id="P13494"/>
<dbReference type="TCDB" id="8.B.6.2.1">
    <property type="family name" value="the ca(2+) channel-targeting spider toxin (cst) family"/>
</dbReference>
<dbReference type="ArachnoServer" id="AS000307">
    <property type="toxin name" value="delta-hexatoxin-Hv1a"/>
</dbReference>
<dbReference type="EvolutionaryTrace" id="P13494"/>
<dbReference type="GO" id="GO:0005576">
    <property type="term" value="C:extracellular region"/>
    <property type="evidence" value="ECO:0007669"/>
    <property type="project" value="UniProtKB-SubCell"/>
</dbReference>
<dbReference type="GO" id="GO:0019871">
    <property type="term" value="F:sodium channel inhibitor activity"/>
    <property type="evidence" value="ECO:0007669"/>
    <property type="project" value="InterPro"/>
</dbReference>
<dbReference type="GO" id="GO:0090729">
    <property type="term" value="F:toxin activity"/>
    <property type="evidence" value="ECO:0007669"/>
    <property type="project" value="UniProtKB-KW"/>
</dbReference>
<dbReference type="Gene3D" id="4.10.40.10">
    <property type="match status" value="1"/>
</dbReference>
<dbReference type="InterPro" id="IPR008017">
    <property type="entry name" value="Delta-hexatoxin"/>
</dbReference>
<dbReference type="Pfam" id="PF05353">
    <property type="entry name" value="Atracotoxin"/>
    <property type="match status" value="1"/>
</dbReference>
<dbReference type="SUPFAM" id="SSF57059">
    <property type="entry name" value="omega toxin-like"/>
    <property type="match status" value="1"/>
</dbReference>
<dbReference type="PROSITE" id="PS60018">
    <property type="entry name" value="DELTA_ACTX"/>
    <property type="match status" value="1"/>
</dbReference>
<sequence length="42" mass="4856">CAKKRNWCGKTEDCCCPMKCVYAWYNEQGSCQSTISALWKKC</sequence>
<keyword id="KW-0002">3D-structure</keyword>
<keyword id="KW-0903">Direct protein sequencing</keyword>
<keyword id="KW-1015">Disulfide bond</keyword>
<keyword id="KW-0872">Ion channel impairing toxin</keyword>
<keyword id="KW-0960">Knottin</keyword>
<keyword id="KW-0528">Neurotoxin</keyword>
<keyword id="KW-0964">Secreted</keyword>
<keyword id="KW-0800">Toxin</keyword>
<keyword id="KW-0738">Voltage-gated sodium channel impairing toxin</keyword>
<protein>
    <recommendedName>
        <fullName evidence="19">Delta-hexatoxin-Hv1a</fullName>
        <shortName evidence="19">Delta-HXTX-Hv1a</shortName>
    </recommendedName>
    <alternativeName>
        <fullName evidence="17 18">Delta-atracotoxin-Hv1</fullName>
        <shortName evidence="17">Delta-ACTX-Hv1</shortName>
    </alternativeName>
    <alternativeName>
        <fullName evidence="10 11">Delta-atracotoxin-Hv1a</fullName>
        <shortName evidence="10 11 12">Delta-ACTX-Hv1a</shortName>
    </alternativeName>
    <alternativeName>
        <fullName evidence="19">Delta-hexatoxin-Hv1a_2</fullName>
        <shortName evidence="19">Delta-HXTX-Hv1a_2</shortName>
    </alternativeName>
    <alternativeName>
        <fullName evidence="13 14 15 16">Versutoxin</fullName>
        <shortName evidence="13 14 15 16">VTX</shortName>
    </alternativeName>
</protein>